<organism>
    <name type="scientific">Aspergillus niger (strain ATCC MYA-4892 / CBS 513.88 / FGSC A1513)</name>
    <dbReference type="NCBI Taxonomy" id="425011"/>
    <lineage>
        <taxon>Eukaryota</taxon>
        <taxon>Fungi</taxon>
        <taxon>Dikarya</taxon>
        <taxon>Ascomycota</taxon>
        <taxon>Pezizomycotina</taxon>
        <taxon>Eurotiomycetes</taxon>
        <taxon>Eurotiomycetidae</taxon>
        <taxon>Eurotiales</taxon>
        <taxon>Aspergillaceae</taxon>
        <taxon>Aspergillus</taxon>
        <taxon>Aspergillus subgen. Circumdati</taxon>
    </lineage>
</organism>
<proteinExistence type="inferred from homology"/>
<accession>A2QQU8</accession>
<keyword id="KW-0238">DNA-binding</keyword>
<keyword id="KW-0472">Membrane</keyword>
<keyword id="KW-0479">Metal-binding</keyword>
<keyword id="KW-0539">Nucleus</keyword>
<keyword id="KW-1185">Reference proteome</keyword>
<keyword id="KW-0804">Transcription</keyword>
<keyword id="KW-0805">Transcription regulation</keyword>
<keyword id="KW-0812">Transmembrane</keyword>
<keyword id="KW-1133">Transmembrane helix</keyword>
<keyword id="KW-0862">Zinc</keyword>
<sequence>MQQTAALPKRLSCDRCYAQKLRCPRPSTNDDASCIRCLRQKVQCVYSTALPKGRPRAAVRACAAGAGATAGAPPITTTTTTAAPSSSDTAPPIFSTEDLASLTGLSTSGWLPDPTWEDSFCFLSSQVVPQPPPLDTTPPPRSLSASGLDNPENCVGRLSDLATRLHAVYQTTRALSDHPLITNAAFEAVTTLFNAPLSPPSAATTAATTNLRETFTSSRHLLETISHLLWATPNNNPSTAPAAAADETVIYHFTIACYSLLLLIYATLLTALHRDALTHTQPSLSTTTTTTGPDNNTSTWCSAPSLVELRLVLLFHMITYFLDRLQQMIRMYTAEFEKQASNSTTGRRPPTSGRWSEEVEEMMVVEEPWEREQHIPPPPPPTSSLGSISELETQARAALMQLRMSLVATRGGLVDN</sequence>
<gene>
    <name evidence="5" type="primary">caaR</name>
    <name type="ORF">An08g03770</name>
</gene>
<name>CAAR_ASPNC</name>
<evidence type="ECO:0000255" key="1"/>
<evidence type="ECO:0000255" key="2">
    <source>
        <dbReference type="PROSITE-ProRule" id="PRU00227"/>
    </source>
</evidence>
<evidence type="ECO:0000256" key="3">
    <source>
        <dbReference type="SAM" id="MobiDB-lite"/>
    </source>
</evidence>
<evidence type="ECO:0000269" key="4">
    <source>
    </source>
</evidence>
<evidence type="ECO:0000303" key="5">
    <source>
    </source>
</evidence>
<feature type="chain" id="PRO_0000462136" description="Transcription factor caaR">
    <location>
        <begin position="1"/>
        <end position="416"/>
    </location>
</feature>
<feature type="transmembrane region" description="Helical" evidence="1">
    <location>
        <begin position="249"/>
        <end position="269"/>
    </location>
</feature>
<feature type="transmembrane region" description="Helical" evidence="1">
    <location>
        <begin position="302"/>
        <end position="322"/>
    </location>
</feature>
<feature type="DNA-binding region" description="Zn(2)-C6 fungal-type" evidence="2">
    <location>
        <begin position="13"/>
        <end position="44"/>
    </location>
</feature>
<feature type="region of interest" description="Disordered" evidence="3">
    <location>
        <begin position="68"/>
        <end position="90"/>
    </location>
</feature>
<feature type="region of interest" description="Disordered" evidence="3">
    <location>
        <begin position="130"/>
        <end position="150"/>
    </location>
</feature>
<feature type="compositionally biased region" description="Pro residues" evidence="3">
    <location>
        <begin position="130"/>
        <end position="141"/>
    </location>
</feature>
<protein>
    <recommendedName>
        <fullName evidence="5">Transcription factor caaR</fullName>
    </recommendedName>
    <alternativeName>
        <fullName evidence="5">Carlosic acid biosynthesis cluster regulator</fullName>
    </alternativeName>
</protein>
<reference key="1">
    <citation type="journal article" date="2007" name="Nat. Biotechnol.">
        <title>Genome sequencing and analysis of the versatile cell factory Aspergillus niger CBS 513.88.</title>
        <authorList>
            <person name="Pel H.J."/>
            <person name="de Winde J.H."/>
            <person name="Archer D.B."/>
            <person name="Dyer P.S."/>
            <person name="Hofmann G."/>
            <person name="Schaap P.J."/>
            <person name="Turner G."/>
            <person name="de Vries R.P."/>
            <person name="Albang R."/>
            <person name="Albermann K."/>
            <person name="Andersen M.R."/>
            <person name="Bendtsen J.D."/>
            <person name="Benen J.A.E."/>
            <person name="van den Berg M."/>
            <person name="Breestraat S."/>
            <person name="Caddick M.X."/>
            <person name="Contreras R."/>
            <person name="Cornell M."/>
            <person name="Coutinho P.M."/>
            <person name="Danchin E.G.J."/>
            <person name="Debets A.J.M."/>
            <person name="Dekker P."/>
            <person name="van Dijck P.W.M."/>
            <person name="van Dijk A."/>
            <person name="Dijkhuizen L."/>
            <person name="Driessen A.J.M."/>
            <person name="d'Enfert C."/>
            <person name="Geysens S."/>
            <person name="Goosen C."/>
            <person name="Groot G.S.P."/>
            <person name="de Groot P.W.J."/>
            <person name="Guillemette T."/>
            <person name="Henrissat B."/>
            <person name="Herweijer M."/>
            <person name="van den Hombergh J.P.T.W."/>
            <person name="van den Hondel C.A.M.J.J."/>
            <person name="van der Heijden R.T.J.M."/>
            <person name="van der Kaaij R.M."/>
            <person name="Klis F.M."/>
            <person name="Kools H.J."/>
            <person name="Kubicek C.P."/>
            <person name="van Kuyk P.A."/>
            <person name="Lauber J."/>
            <person name="Lu X."/>
            <person name="van der Maarel M.J.E.C."/>
            <person name="Meulenberg R."/>
            <person name="Menke H."/>
            <person name="Mortimer M.A."/>
            <person name="Nielsen J."/>
            <person name="Oliver S.G."/>
            <person name="Olsthoorn M."/>
            <person name="Pal K."/>
            <person name="van Peij N.N.M.E."/>
            <person name="Ram A.F.J."/>
            <person name="Rinas U."/>
            <person name="Roubos J.A."/>
            <person name="Sagt C.M.J."/>
            <person name="Schmoll M."/>
            <person name="Sun J."/>
            <person name="Ussery D."/>
            <person name="Varga J."/>
            <person name="Vervecken W."/>
            <person name="van de Vondervoort P.J.J."/>
            <person name="Wedler H."/>
            <person name="Woesten H.A.B."/>
            <person name="Zeng A.-P."/>
            <person name="van Ooyen A.J.J."/>
            <person name="Visser J."/>
            <person name="Stam H."/>
        </authorList>
    </citation>
    <scope>NUCLEOTIDE SEQUENCE [LARGE SCALE GENOMIC DNA]</scope>
    <source>
        <strain>ATCC MYA-4892 / CBS 513.88 / FGSC A1513</strain>
    </source>
</reference>
<reference key="2">
    <citation type="journal article" date="2014" name="ChemBioChem">
        <title>Three acyltetronic acid derivatives: noncanonical cryptic polyketides from Aspergillus niger identified by genome mining.</title>
        <authorList>
            <person name="Yang X.L."/>
            <person name="Awakawa T."/>
            <person name="Wakimoto T."/>
            <person name="Abe I."/>
        </authorList>
    </citation>
    <scope>FUNCTION</scope>
</reference>
<dbReference type="EMBL" id="AM270165">
    <property type="protein sequence ID" value="CAK45414.1"/>
    <property type="molecule type" value="Genomic_DNA"/>
</dbReference>
<dbReference type="RefSeq" id="XP_001392494.1">
    <property type="nucleotide sequence ID" value="XM_001392457.1"/>
</dbReference>
<dbReference type="EnsemblFungi" id="CAK45414">
    <property type="protein sequence ID" value="CAK45414"/>
    <property type="gene ID" value="An08g03770"/>
</dbReference>
<dbReference type="GeneID" id="4982692"/>
<dbReference type="KEGG" id="ang:An08g03770"/>
<dbReference type="VEuPathDB" id="FungiDB:An08g03770"/>
<dbReference type="HOGENOM" id="CLU_066278_0_0_1"/>
<dbReference type="OrthoDB" id="2422033at2759"/>
<dbReference type="Proteomes" id="UP000006706">
    <property type="component" value="Chromosome 8R"/>
</dbReference>
<dbReference type="GO" id="GO:0016020">
    <property type="term" value="C:membrane"/>
    <property type="evidence" value="ECO:0007669"/>
    <property type="project" value="UniProtKB-SubCell"/>
</dbReference>
<dbReference type="GO" id="GO:0005634">
    <property type="term" value="C:nucleus"/>
    <property type="evidence" value="ECO:0007669"/>
    <property type="project" value="UniProtKB-SubCell"/>
</dbReference>
<dbReference type="GO" id="GO:0003677">
    <property type="term" value="F:DNA binding"/>
    <property type="evidence" value="ECO:0007669"/>
    <property type="project" value="UniProtKB-KW"/>
</dbReference>
<dbReference type="GO" id="GO:0000981">
    <property type="term" value="F:DNA-binding transcription factor activity, RNA polymerase II-specific"/>
    <property type="evidence" value="ECO:0007669"/>
    <property type="project" value="InterPro"/>
</dbReference>
<dbReference type="GO" id="GO:0008270">
    <property type="term" value="F:zinc ion binding"/>
    <property type="evidence" value="ECO:0007669"/>
    <property type="project" value="InterPro"/>
</dbReference>
<dbReference type="GO" id="GO:0009893">
    <property type="term" value="P:positive regulation of metabolic process"/>
    <property type="evidence" value="ECO:0007669"/>
    <property type="project" value="UniProtKB-ARBA"/>
</dbReference>
<dbReference type="CDD" id="cd00067">
    <property type="entry name" value="GAL4"/>
    <property type="match status" value="1"/>
</dbReference>
<dbReference type="Gene3D" id="4.10.240.10">
    <property type="entry name" value="Zn(2)-C6 fungal-type DNA-binding domain"/>
    <property type="match status" value="1"/>
</dbReference>
<dbReference type="InterPro" id="IPR036864">
    <property type="entry name" value="Zn2-C6_fun-type_DNA-bd_sf"/>
</dbReference>
<dbReference type="InterPro" id="IPR001138">
    <property type="entry name" value="Zn2Cys6_DnaBD"/>
</dbReference>
<dbReference type="SUPFAM" id="SSF57701">
    <property type="entry name" value="Zn2/Cys6 DNA-binding domain"/>
    <property type="match status" value="1"/>
</dbReference>
<dbReference type="PROSITE" id="PS50048">
    <property type="entry name" value="ZN2_CY6_FUNGAL_2"/>
    <property type="match status" value="1"/>
</dbReference>
<comment type="function">
    <text evidence="4">Transcription factor that positively regulates the expression of the gene cluster that mediates the biosynthesis of the acyltetronic acid derivatives carlosic acid, agglomerin F and carlosic acid methyl ether.</text>
</comment>
<comment type="subcellular location">
    <subcellularLocation>
        <location evidence="1">Membrane</location>
        <topology evidence="1">Multi-pass membrane protein</topology>
    </subcellularLocation>
    <subcellularLocation>
        <location evidence="2">Nucleus</location>
    </subcellularLocation>
</comment>